<gene>
    <name type="primary">cwf19l1</name>
</gene>
<sequence>MGERVLRVLTCGDVYGRFDVLFNRVRVIQKKSGQFDMLLCVGSFFGTSPESQTHWDEYKSGAKKAPIQTYVLGANNQETVKHFKDVDGCELAANITYLGRKGLFTGASGLQIAYLSGIESSSEPAPAYCFTAKDVTSLKMSLMSNSKFKGVDILLTSSWPKDVSNYGNALPNEASKKCGSALISNLAFNLKPRYHFAALEGENYERLPYRNHLVLQENAQHVSRFISLASVGNLDKKKYIYAFNIVPMSLTDIADLVKQPLDVTENPYRKSDKDTPKSKGNKSAEEEEPTQQFFFDLNKPQGKKRQTDGKGGRQSQAKQPRKHPQPTGPCWFCLASPEVEKHLVVSIGDNCYVALAKGGLMSDHVLILPIGHYQSTVDLSSDVVKEVEQYKAALRTFFKTKGKRYVMFERNYKSQHLQLQVVPLPLSCCTTEDIKETFILQAQEQGMELLEIPEHSDIKQIAQPGTPYFYVELDSGEKLFHRIKKHFPLQFGREVLASEAILNIPTRADWKDCKSSRAEEEDLTKTFRDAFEPFDFTLQD</sequence>
<evidence type="ECO:0000256" key="1">
    <source>
        <dbReference type="SAM" id="MobiDB-lite"/>
    </source>
</evidence>
<evidence type="ECO:0000305" key="2"/>
<protein>
    <recommendedName>
        <fullName>CWF19-like protein 1</fullName>
    </recommendedName>
</protein>
<feature type="chain" id="PRO_0000315645" description="CWF19-like protein 1">
    <location>
        <begin position="1"/>
        <end position="540"/>
    </location>
</feature>
<feature type="region of interest" description="Disordered" evidence="1">
    <location>
        <begin position="265"/>
        <end position="326"/>
    </location>
</feature>
<feature type="compositionally biased region" description="Basic and acidic residues" evidence="1">
    <location>
        <begin position="267"/>
        <end position="277"/>
    </location>
</feature>
<reference key="1">
    <citation type="submission" date="2003-01" db="EMBL/GenBank/DDBJ databases">
        <authorList>
            <consortium name="NIH - Xenopus Gene Collection (XGC) project"/>
        </authorList>
    </citation>
    <scope>NUCLEOTIDE SEQUENCE [LARGE SCALE MRNA]</scope>
    <source>
        <tissue>Embryo</tissue>
    </source>
</reference>
<keyword id="KW-1185">Reference proteome</keyword>
<accession>Q8AVL0</accession>
<dbReference type="EMBL" id="BC042216">
    <property type="protein sequence ID" value="AAH42216.1"/>
    <property type="molecule type" value="mRNA"/>
</dbReference>
<dbReference type="RefSeq" id="NP_001079424.1">
    <property type="nucleotide sequence ID" value="NM_001085955.1"/>
</dbReference>
<dbReference type="SMR" id="Q8AVL0"/>
<dbReference type="GeneID" id="379111"/>
<dbReference type="KEGG" id="xla:379111"/>
<dbReference type="AGR" id="Xenbase:XB-GENE-995272"/>
<dbReference type="CTD" id="379111"/>
<dbReference type="Xenbase" id="XB-GENE-995272">
    <property type="gene designation" value="cwf19l1.L"/>
</dbReference>
<dbReference type="OMA" id="IVPITHY"/>
<dbReference type="OrthoDB" id="444325at2759"/>
<dbReference type="Proteomes" id="UP000186698">
    <property type="component" value="Chromosome 1L"/>
</dbReference>
<dbReference type="Bgee" id="379111">
    <property type="expression patterns" value="Expressed in egg cell and 19 other cell types or tissues"/>
</dbReference>
<dbReference type="GO" id="GO:0071014">
    <property type="term" value="C:post-mRNA release spliceosomal complex"/>
    <property type="evidence" value="ECO:0000318"/>
    <property type="project" value="GO_Central"/>
</dbReference>
<dbReference type="GO" id="GO:0061632">
    <property type="term" value="F:RNA lariat debranching enzyme activator activity"/>
    <property type="evidence" value="ECO:0000318"/>
    <property type="project" value="GO_Central"/>
</dbReference>
<dbReference type="GO" id="GO:0000398">
    <property type="term" value="P:mRNA splicing, via spliceosome"/>
    <property type="evidence" value="ECO:0000318"/>
    <property type="project" value="GO_Central"/>
</dbReference>
<dbReference type="CDD" id="cd07380">
    <property type="entry name" value="MPP_CWF19_N"/>
    <property type="match status" value="1"/>
</dbReference>
<dbReference type="FunFam" id="3.30.428.10:FF:000024">
    <property type="entry name" value="CWF19-like cell cycle control factor 1"/>
    <property type="match status" value="1"/>
</dbReference>
<dbReference type="Gene3D" id="3.30.428.10">
    <property type="entry name" value="HIT-like"/>
    <property type="match status" value="1"/>
</dbReference>
<dbReference type="InterPro" id="IPR040194">
    <property type="entry name" value="Cwf19-like"/>
</dbReference>
<dbReference type="InterPro" id="IPR006768">
    <property type="entry name" value="Cwf19-like_C_dom-1"/>
</dbReference>
<dbReference type="InterPro" id="IPR006767">
    <property type="entry name" value="Cwf19-like_C_dom-2"/>
</dbReference>
<dbReference type="InterPro" id="IPR036265">
    <property type="entry name" value="HIT-like_sf"/>
</dbReference>
<dbReference type="PANTHER" id="PTHR12072">
    <property type="entry name" value="CWF19, CELL CYCLE CONTROL PROTEIN"/>
    <property type="match status" value="1"/>
</dbReference>
<dbReference type="PANTHER" id="PTHR12072:SF4">
    <property type="entry name" value="CWF19-LIKE PROTEIN 1"/>
    <property type="match status" value="1"/>
</dbReference>
<dbReference type="Pfam" id="PF04677">
    <property type="entry name" value="CwfJ_C_1"/>
    <property type="match status" value="1"/>
</dbReference>
<dbReference type="Pfam" id="PF04676">
    <property type="entry name" value="CwfJ_C_2"/>
    <property type="match status" value="1"/>
</dbReference>
<dbReference type="SUPFAM" id="SSF54197">
    <property type="entry name" value="HIT-like"/>
    <property type="match status" value="1"/>
</dbReference>
<organism>
    <name type="scientific">Xenopus laevis</name>
    <name type="common">African clawed frog</name>
    <dbReference type="NCBI Taxonomy" id="8355"/>
    <lineage>
        <taxon>Eukaryota</taxon>
        <taxon>Metazoa</taxon>
        <taxon>Chordata</taxon>
        <taxon>Craniata</taxon>
        <taxon>Vertebrata</taxon>
        <taxon>Euteleostomi</taxon>
        <taxon>Amphibia</taxon>
        <taxon>Batrachia</taxon>
        <taxon>Anura</taxon>
        <taxon>Pipoidea</taxon>
        <taxon>Pipidae</taxon>
        <taxon>Xenopodinae</taxon>
        <taxon>Xenopus</taxon>
        <taxon>Xenopus</taxon>
    </lineage>
</organism>
<comment type="similarity">
    <text evidence="2">Belongs to the CWF19 family.</text>
</comment>
<proteinExistence type="evidence at transcript level"/>
<name>C19L1_XENLA</name>